<feature type="chain" id="PRO_0000242100" description="Arginine--tRNA ligase">
    <location>
        <begin position="1"/>
        <end position="563"/>
    </location>
</feature>
<feature type="short sequence motif" description="'HIGH' region">
    <location>
        <begin position="121"/>
        <end position="131"/>
    </location>
</feature>
<proteinExistence type="inferred from homology"/>
<dbReference type="EC" id="6.1.1.19" evidence="1"/>
<dbReference type="EMBL" id="CP000056">
    <property type="protein sequence ID" value="AAX72927.1"/>
    <property type="molecule type" value="Genomic_DNA"/>
</dbReference>
<dbReference type="RefSeq" id="WP_011285288.1">
    <property type="nucleotide sequence ID" value="NC_007296.2"/>
</dbReference>
<dbReference type="SMR" id="Q48QT3"/>
<dbReference type="KEGG" id="spb:M28_Spy1817"/>
<dbReference type="HOGENOM" id="CLU_006406_6_1_9"/>
<dbReference type="GO" id="GO:0005737">
    <property type="term" value="C:cytoplasm"/>
    <property type="evidence" value="ECO:0007669"/>
    <property type="project" value="UniProtKB-SubCell"/>
</dbReference>
<dbReference type="GO" id="GO:0004814">
    <property type="term" value="F:arginine-tRNA ligase activity"/>
    <property type="evidence" value="ECO:0007669"/>
    <property type="project" value="UniProtKB-UniRule"/>
</dbReference>
<dbReference type="GO" id="GO:0005524">
    <property type="term" value="F:ATP binding"/>
    <property type="evidence" value="ECO:0007669"/>
    <property type="project" value="UniProtKB-UniRule"/>
</dbReference>
<dbReference type="GO" id="GO:0006420">
    <property type="term" value="P:arginyl-tRNA aminoacylation"/>
    <property type="evidence" value="ECO:0007669"/>
    <property type="project" value="UniProtKB-UniRule"/>
</dbReference>
<dbReference type="CDD" id="cd07956">
    <property type="entry name" value="Anticodon_Ia_Arg"/>
    <property type="match status" value="1"/>
</dbReference>
<dbReference type="CDD" id="cd00671">
    <property type="entry name" value="ArgRS_core"/>
    <property type="match status" value="1"/>
</dbReference>
<dbReference type="FunFam" id="3.40.50.620:FF:000116">
    <property type="entry name" value="Arginine--tRNA ligase"/>
    <property type="match status" value="1"/>
</dbReference>
<dbReference type="FunFam" id="1.10.730.10:FF:000006">
    <property type="entry name" value="Arginyl-tRNA synthetase 2, mitochondrial"/>
    <property type="match status" value="1"/>
</dbReference>
<dbReference type="Gene3D" id="3.30.1360.70">
    <property type="entry name" value="Arginyl tRNA synthetase N-terminal domain"/>
    <property type="match status" value="1"/>
</dbReference>
<dbReference type="Gene3D" id="3.40.50.620">
    <property type="entry name" value="HUPs"/>
    <property type="match status" value="1"/>
</dbReference>
<dbReference type="Gene3D" id="1.10.730.10">
    <property type="entry name" value="Isoleucyl-tRNA Synthetase, Domain 1"/>
    <property type="match status" value="1"/>
</dbReference>
<dbReference type="HAMAP" id="MF_00123">
    <property type="entry name" value="Arg_tRNA_synth"/>
    <property type="match status" value="1"/>
</dbReference>
<dbReference type="InterPro" id="IPR001278">
    <property type="entry name" value="Arg-tRNA-ligase"/>
</dbReference>
<dbReference type="InterPro" id="IPR005148">
    <property type="entry name" value="Arg-tRNA-synth_N"/>
</dbReference>
<dbReference type="InterPro" id="IPR036695">
    <property type="entry name" value="Arg-tRNA-synth_N_sf"/>
</dbReference>
<dbReference type="InterPro" id="IPR035684">
    <property type="entry name" value="ArgRS_core"/>
</dbReference>
<dbReference type="InterPro" id="IPR008909">
    <property type="entry name" value="DALR_anticod-bd"/>
</dbReference>
<dbReference type="InterPro" id="IPR014729">
    <property type="entry name" value="Rossmann-like_a/b/a_fold"/>
</dbReference>
<dbReference type="InterPro" id="IPR009080">
    <property type="entry name" value="tRNAsynth_Ia_anticodon-bd"/>
</dbReference>
<dbReference type="NCBIfam" id="TIGR00456">
    <property type="entry name" value="argS"/>
    <property type="match status" value="1"/>
</dbReference>
<dbReference type="PANTHER" id="PTHR11956:SF5">
    <property type="entry name" value="ARGININE--TRNA LIGASE, CYTOPLASMIC"/>
    <property type="match status" value="1"/>
</dbReference>
<dbReference type="PANTHER" id="PTHR11956">
    <property type="entry name" value="ARGINYL-TRNA SYNTHETASE"/>
    <property type="match status" value="1"/>
</dbReference>
<dbReference type="Pfam" id="PF03485">
    <property type="entry name" value="Arg_tRNA_synt_N"/>
    <property type="match status" value="1"/>
</dbReference>
<dbReference type="Pfam" id="PF05746">
    <property type="entry name" value="DALR_1"/>
    <property type="match status" value="1"/>
</dbReference>
<dbReference type="Pfam" id="PF00750">
    <property type="entry name" value="tRNA-synt_1d"/>
    <property type="match status" value="1"/>
</dbReference>
<dbReference type="PRINTS" id="PR01038">
    <property type="entry name" value="TRNASYNTHARG"/>
</dbReference>
<dbReference type="SMART" id="SM01016">
    <property type="entry name" value="Arg_tRNA_synt_N"/>
    <property type="match status" value="1"/>
</dbReference>
<dbReference type="SMART" id="SM00836">
    <property type="entry name" value="DALR_1"/>
    <property type="match status" value="1"/>
</dbReference>
<dbReference type="SUPFAM" id="SSF47323">
    <property type="entry name" value="Anticodon-binding domain of a subclass of class I aminoacyl-tRNA synthetases"/>
    <property type="match status" value="1"/>
</dbReference>
<dbReference type="SUPFAM" id="SSF55190">
    <property type="entry name" value="Arginyl-tRNA synthetase (ArgRS), N-terminal 'additional' domain"/>
    <property type="match status" value="1"/>
</dbReference>
<dbReference type="SUPFAM" id="SSF52374">
    <property type="entry name" value="Nucleotidylyl transferase"/>
    <property type="match status" value="1"/>
</dbReference>
<evidence type="ECO:0000255" key="1">
    <source>
        <dbReference type="HAMAP-Rule" id="MF_00123"/>
    </source>
</evidence>
<organism>
    <name type="scientific">Streptococcus pyogenes serotype M28 (strain MGAS6180)</name>
    <dbReference type="NCBI Taxonomy" id="319701"/>
    <lineage>
        <taxon>Bacteria</taxon>
        <taxon>Bacillati</taxon>
        <taxon>Bacillota</taxon>
        <taxon>Bacilli</taxon>
        <taxon>Lactobacillales</taxon>
        <taxon>Streptococcaceae</taxon>
        <taxon>Streptococcus</taxon>
    </lineage>
</organism>
<accession>Q48QT3</accession>
<name>SYR_STRPM</name>
<reference key="1">
    <citation type="journal article" date="2005" name="J. Infect. Dis.">
        <title>Genome sequence of a serotype M28 strain of group A Streptococcus: potential new insights into puerperal sepsis and bacterial disease specificity.</title>
        <authorList>
            <person name="Green N.M."/>
            <person name="Zhang S."/>
            <person name="Porcella S.F."/>
            <person name="Nagiec M.J."/>
            <person name="Barbian K.D."/>
            <person name="Beres S.B."/>
            <person name="Lefebvre R.B."/>
            <person name="Musser J.M."/>
        </authorList>
    </citation>
    <scope>NUCLEOTIDE SEQUENCE [LARGE SCALE GENOMIC DNA]</scope>
    <source>
        <strain>MGAS6180</strain>
    </source>
</reference>
<sequence length="563" mass="63167">MDTKTLIASEIAKVVPELEQDAIFNLLETPKNSDMGDLAFPAFSLAKVLRKAPQMIASELAEQIDESQFEKVVAVGPYINFFLDKTKISSQVLEQVITAGSDYAQQDEGQGRNVAIDMSSPNIAKPFSIGHLRSTVIGDSLAHIFAKMGYKPVKINHLGDWGKQFGMLIVAYKKWGDEAAVQAHPIDELLKLYVRINAEAETDPTVDEEAREWFRKLEDGDKEATELWQWFRDESLLEFNRLYDQLHVTFDSYNGEAFYNDKMDEVLDLLEAKNLLVESKGAQVVNLEKYGIEHPALIKKSDGATLYITRDLAAALYRKRTYDFAKSVYVVGNEQAAHFKQLKAVLKEMGYDWSDDMTHVAFGLVTKGGAKLSTRKGNVILLEPTVAEAINRAASQIEAKNPNLADKEAVAHSVGVGAIKFYDLKTDRMNGYDFDLEAMVSFEGETGPYVQYAHARIQSILRKADFTPSATTTYSLADAESWEIIKLIQDFPRIIKRTSDNFEPSIMAKFAINLAQSFNKYYAHTRILDDNSERDNRLALCYATATVLKEALRLLGVDAPNEM</sequence>
<keyword id="KW-0030">Aminoacyl-tRNA synthetase</keyword>
<keyword id="KW-0067">ATP-binding</keyword>
<keyword id="KW-0963">Cytoplasm</keyword>
<keyword id="KW-0436">Ligase</keyword>
<keyword id="KW-0547">Nucleotide-binding</keyword>
<keyword id="KW-0648">Protein biosynthesis</keyword>
<comment type="catalytic activity">
    <reaction evidence="1">
        <text>tRNA(Arg) + L-arginine + ATP = L-arginyl-tRNA(Arg) + AMP + diphosphate</text>
        <dbReference type="Rhea" id="RHEA:20301"/>
        <dbReference type="Rhea" id="RHEA-COMP:9658"/>
        <dbReference type="Rhea" id="RHEA-COMP:9673"/>
        <dbReference type="ChEBI" id="CHEBI:30616"/>
        <dbReference type="ChEBI" id="CHEBI:32682"/>
        <dbReference type="ChEBI" id="CHEBI:33019"/>
        <dbReference type="ChEBI" id="CHEBI:78442"/>
        <dbReference type="ChEBI" id="CHEBI:78513"/>
        <dbReference type="ChEBI" id="CHEBI:456215"/>
        <dbReference type="EC" id="6.1.1.19"/>
    </reaction>
</comment>
<comment type="subunit">
    <text evidence="1">Monomer.</text>
</comment>
<comment type="subcellular location">
    <subcellularLocation>
        <location evidence="1">Cytoplasm</location>
    </subcellularLocation>
</comment>
<comment type="similarity">
    <text evidence="1">Belongs to the class-I aminoacyl-tRNA synthetase family.</text>
</comment>
<protein>
    <recommendedName>
        <fullName evidence="1">Arginine--tRNA ligase</fullName>
        <ecNumber evidence="1">6.1.1.19</ecNumber>
    </recommendedName>
    <alternativeName>
        <fullName evidence="1">Arginyl-tRNA synthetase</fullName>
        <shortName evidence="1">ArgRS</shortName>
    </alternativeName>
</protein>
<gene>
    <name evidence="1" type="primary">argS</name>
    <name type="ordered locus">M28_Spy1817</name>
</gene>